<proteinExistence type="inferred from homology"/>
<sequence length="600" mass="63495">MPAVGDQHKLIANPFEEPQRRISEYTAQEIATLQSRLEKQLGPEYLSSRAGPSGQKVHYISSEKCIQLANEVFGFNGWSSSIQNIQVDFVDEHPQTLKINMGISVIMRVTLRDGTYHEDLGYGHIENCKGKAAAFEKAKKEATTDALKRALRQFGNVLGNCIYDKQYLAKVTKMKVEPTKFAEDNLHRHSDFVKKEPVEADIMKVDSVGAGARPPALGNEESFEDLLGELDEADFNMADEGHPDEVVLPQAVHNSLNDKPVHQQLTNLNPQAQQSRPLSRSGSTGSLNTRQQPQNSHQFTARAQSRPPQQQLNSNQSRPMGQPVNNSSNANTPNNPQNYTTPQKPAPAAPAPQAGAAVAPAPETVGFFSAKAVTQLPEEALASGQVAPKPGLAFNPHAESPSIRKTPGIDHTKSKPLARNGQHVPPAKTTETEAEPSTSLSRPAGAHAASRPVTMNEARSASGSFSRAGPPMGGNAGNMGKPNVVNPQLDHTRRIGAPGMSGFSSSPSTNRGQYRPLTMKRPAPVVGGGAGQTKDGNGDSATTTTIAANTTAGSATGGNAAPSAGNGGRVPLTDMSANASNATAAGAATSGPEVKRQRLA</sequence>
<name>RAD52_NEUCR</name>
<feature type="chain" id="PRO_0000173890" description="DNA repair and recombination protein mus-11">
    <location>
        <begin position="1"/>
        <end position="600"/>
    </location>
</feature>
<feature type="DNA-binding region" evidence="1">
    <location>
        <begin position="148"/>
        <end position="152"/>
    </location>
</feature>
<feature type="region of interest" description="Disordered" evidence="2">
    <location>
        <begin position="268"/>
        <end position="357"/>
    </location>
</feature>
<feature type="region of interest" description="Disordered" evidence="2">
    <location>
        <begin position="387"/>
        <end position="600"/>
    </location>
</feature>
<feature type="compositionally biased region" description="Polar residues" evidence="2">
    <location>
        <begin position="268"/>
        <end position="319"/>
    </location>
</feature>
<feature type="compositionally biased region" description="Low complexity" evidence="2">
    <location>
        <begin position="325"/>
        <end position="343"/>
    </location>
</feature>
<feature type="compositionally biased region" description="Low complexity" evidence="2">
    <location>
        <begin position="458"/>
        <end position="470"/>
    </location>
</feature>
<feature type="compositionally biased region" description="Polar residues" evidence="2">
    <location>
        <begin position="502"/>
        <end position="512"/>
    </location>
</feature>
<feature type="compositionally biased region" description="Low complexity" evidence="2">
    <location>
        <begin position="540"/>
        <end position="564"/>
    </location>
</feature>
<feature type="compositionally biased region" description="Low complexity" evidence="2">
    <location>
        <begin position="577"/>
        <end position="591"/>
    </location>
</feature>
<organism>
    <name type="scientific">Neurospora crassa (strain ATCC 24698 / 74-OR23-1A / CBS 708.71 / DSM 1257 / FGSC 987)</name>
    <dbReference type="NCBI Taxonomy" id="367110"/>
    <lineage>
        <taxon>Eukaryota</taxon>
        <taxon>Fungi</taxon>
        <taxon>Dikarya</taxon>
        <taxon>Ascomycota</taxon>
        <taxon>Pezizomycotina</taxon>
        <taxon>Sordariomycetes</taxon>
        <taxon>Sordariomycetidae</taxon>
        <taxon>Sordariales</taxon>
        <taxon>Sordariaceae</taxon>
        <taxon>Neurospora</taxon>
    </lineage>
</organism>
<accession>Q9HGI2</accession>
<accession>Q1K793</accession>
<comment type="function">
    <text evidence="1">Involved in DNA double-strand break (DSB) repair and recombination. Promotes the annealing of complementary single-stranded DNA and by stimulation of the mei-3/rad51 recombinase (By similarity).</text>
</comment>
<comment type="subunit">
    <text evidence="1">Part of a complex that includes mei-3/rad51 and mus-11/rad52.</text>
</comment>
<comment type="subcellular location">
    <subcellularLocation>
        <location evidence="1">Nucleus</location>
    </subcellularLocation>
</comment>
<comment type="similarity">
    <text evidence="3">Belongs to the RAD52 family.</text>
</comment>
<comment type="sequence caution" evidence="3">
    <conflict type="erroneous initiation">
        <sequence resource="EMBL-CDS" id="EAA31829"/>
    </conflict>
    <text>Extended N-terminus.</text>
</comment>
<protein>
    <recommendedName>
        <fullName>DNA repair and recombination protein mus-11</fullName>
    </recommendedName>
    <alternativeName>
        <fullName>Mutagen-sensitive protein 11</fullName>
    </alternativeName>
    <alternativeName>
        <fullName>RAD52 homolog</fullName>
    </alternativeName>
</protein>
<evidence type="ECO:0000250" key="1"/>
<evidence type="ECO:0000256" key="2">
    <source>
        <dbReference type="SAM" id="MobiDB-lite"/>
    </source>
</evidence>
<evidence type="ECO:0000305" key="3"/>
<keyword id="KW-0227">DNA damage</keyword>
<keyword id="KW-0233">DNA recombination</keyword>
<keyword id="KW-0234">DNA repair</keyword>
<keyword id="KW-0238">DNA-binding</keyword>
<keyword id="KW-0539">Nucleus</keyword>
<keyword id="KW-1185">Reference proteome</keyword>
<gene>
    <name type="primary">mus-11</name>
    <name type="synonym">rad52</name>
    <name type="ORF">B8L3.020</name>
    <name type="ORF">NCU04275</name>
</gene>
<dbReference type="EMBL" id="AB039859">
    <property type="protein sequence ID" value="BAB13343.1"/>
    <property type="molecule type" value="Genomic_DNA"/>
</dbReference>
<dbReference type="EMBL" id="AL513462">
    <property type="protein sequence ID" value="CAC28736.1"/>
    <property type="molecule type" value="Genomic_DNA"/>
</dbReference>
<dbReference type="EMBL" id="CM002240">
    <property type="protein sequence ID" value="EAA31829.2"/>
    <property type="status" value="ALT_INIT"/>
    <property type="molecule type" value="Genomic_DNA"/>
</dbReference>
<dbReference type="RefSeq" id="XP_961065.2">
    <property type="nucleotide sequence ID" value="XM_955972.2"/>
</dbReference>
<dbReference type="SMR" id="Q9HGI2"/>
<dbReference type="FunCoup" id="Q9HGI2">
    <property type="interactions" value="248"/>
</dbReference>
<dbReference type="STRING" id="367110.Q9HGI2"/>
<dbReference type="PaxDb" id="5141-EFNCRP00000003767"/>
<dbReference type="EnsemblFungi" id="EAA31829">
    <property type="protein sequence ID" value="EAA31829"/>
    <property type="gene ID" value="NCU04275"/>
</dbReference>
<dbReference type="GeneID" id="3877219"/>
<dbReference type="KEGG" id="ncr:NCU04275"/>
<dbReference type="HOGENOM" id="CLU_011431_4_0_1"/>
<dbReference type="InParanoid" id="Q9HGI2"/>
<dbReference type="OMA" id="NLHRHAD"/>
<dbReference type="OrthoDB" id="206565at2759"/>
<dbReference type="Proteomes" id="UP000001805">
    <property type="component" value="Chromosome 2, Linkage Group V"/>
</dbReference>
<dbReference type="GO" id="GO:0005634">
    <property type="term" value="C:nucleus"/>
    <property type="evidence" value="ECO:0000318"/>
    <property type="project" value="GO_Central"/>
</dbReference>
<dbReference type="GO" id="GO:0003677">
    <property type="term" value="F:DNA binding"/>
    <property type="evidence" value="ECO:0007669"/>
    <property type="project" value="UniProtKB-KW"/>
</dbReference>
<dbReference type="GO" id="GO:0000730">
    <property type="term" value="P:DNA recombinase assembly"/>
    <property type="evidence" value="ECO:0007669"/>
    <property type="project" value="InterPro"/>
</dbReference>
<dbReference type="GO" id="GO:0000724">
    <property type="term" value="P:double-strand break repair via homologous recombination"/>
    <property type="evidence" value="ECO:0000318"/>
    <property type="project" value="GO_Central"/>
</dbReference>
<dbReference type="GO" id="GO:0045002">
    <property type="term" value="P:double-strand break repair via single-strand annealing"/>
    <property type="evidence" value="ECO:0000318"/>
    <property type="project" value="GO_Central"/>
</dbReference>
<dbReference type="GO" id="GO:0006312">
    <property type="term" value="P:mitotic recombination"/>
    <property type="evidence" value="ECO:0000318"/>
    <property type="project" value="GO_Central"/>
</dbReference>
<dbReference type="FunFam" id="3.30.390.80:FF:000001">
    <property type="entry name" value="DNA repair protein RAD52 homolog"/>
    <property type="match status" value="1"/>
</dbReference>
<dbReference type="Gene3D" id="3.30.390.80">
    <property type="entry name" value="DNA repair protein Rad52/59/22"/>
    <property type="match status" value="1"/>
</dbReference>
<dbReference type="InterPro" id="IPR004585">
    <property type="entry name" value="DNA_recomb/repair_Rad52"/>
</dbReference>
<dbReference type="InterPro" id="IPR041247">
    <property type="entry name" value="Rad52_fam"/>
</dbReference>
<dbReference type="InterPro" id="IPR007232">
    <property type="entry name" value="Rad52_Rad59_Rad22"/>
</dbReference>
<dbReference type="InterPro" id="IPR042525">
    <property type="entry name" value="Rad52_Rad59_Rad22_sf"/>
</dbReference>
<dbReference type="NCBIfam" id="TIGR00607">
    <property type="entry name" value="rad52"/>
    <property type="match status" value="1"/>
</dbReference>
<dbReference type="PANTHER" id="PTHR12132">
    <property type="entry name" value="DNA REPAIR AND RECOMBINATION PROTEIN RAD52, RAD59"/>
    <property type="match status" value="1"/>
</dbReference>
<dbReference type="PANTHER" id="PTHR12132:SF1">
    <property type="entry name" value="DNA REPAIR PROTEIN RAD52 HOMOLOG"/>
    <property type="match status" value="1"/>
</dbReference>
<dbReference type="Pfam" id="PF04098">
    <property type="entry name" value="Rad52_Rad22"/>
    <property type="match status" value="1"/>
</dbReference>
<dbReference type="SUPFAM" id="SSF54768">
    <property type="entry name" value="dsRNA-binding domain-like"/>
    <property type="match status" value="1"/>
</dbReference>
<reference key="1">
    <citation type="journal article" date="2000" name="Mol. Gen. Genet.">
        <title>A Neurospora double-strand-break repair gene, mus-11, encodes a RAD52 homologue and is inducible by mutagens.</title>
        <authorList>
            <person name="Sakuraba Y."/>
            <person name="Schroeder A.L."/>
            <person name="Ishii C."/>
            <person name="Inoue H."/>
        </authorList>
    </citation>
    <scope>NUCLEOTIDE SEQUENCE [GENOMIC DNA]</scope>
</reference>
<reference key="2">
    <citation type="journal article" date="2003" name="Nucleic Acids Res.">
        <title>What's in the genome of a filamentous fungus? Analysis of the Neurospora genome sequence.</title>
        <authorList>
            <person name="Mannhaupt G."/>
            <person name="Montrone C."/>
            <person name="Haase D."/>
            <person name="Mewes H.-W."/>
            <person name="Aign V."/>
            <person name="Hoheisel J.D."/>
            <person name="Fartmann B."/>
            <person name="Nyakatura G."/>
            <person name="Kempken F."/>
            <person name="Maier J."/>
            <person name="Schulte U."/>
        </authorList>
    </citation>
    <scope>NUCLEOTIDE SEQUENCE [LARGE SCALE GENOMIC DNA]</scope>
    <source>
        <strain>ATCC 24698 / 74-OR23-1A / CBS 708.71 / DSM 1257 / FGSC 987</strain>
    </source>
</reference>
<reference key="3">
    <citation type="journal article" date="2003" name="Nature">
        <title>The genome sequence of the filamentous fungus Neurospora crassa.</title>
        <authorList>
            <person name="Galagan J.E."/>
            <person name="Calvo S.E."/>
            <person name="Borkovich K.A."/>
            <person name="Selker E.U."/>
            <person name="Read N.D."/>
            <person name="Jaffe D.B."/>
            <person name="FitzHugh W."/>
            <person name="Ma L.-J."/>
            <person name="Smirnov S."/>
            <person name="Purcell S."/>
            <person name="Rehman B."/>
            <person name="Elkins T."/>
            <person name="Engels R."/>
            <person name="Wang S."/>
            <person name="Nielsen C.B."/>
            <person name="Butler J."/>
            <person name="Endrizzi M."/>
            <person name="Qui D."/>
            <person name="Ianakiev P."/>
            <person name="Bell-Pedersen D."/>
            <person name="Nelson M.A."/>
            <person name="Werner-Washburne M."/>
            <person name="Selitrennikoff C.P."/>
            <person name="Kinsey J.A."/>
            <person name="Braun E.L."/>
            <person name="Zelter A."/>
            <person name="Schulte U."/>
            <person name="Kothe G.O."/>
            <person name="Jedd G."/>
            <person name="Mewes H.-W."/>
            <person name="Staben C."/>
            <person name="Marcotte E."/>
            <person name="Greenberg D."/>
            <person name="Roy A."/>
            <person name="Foley K."/>
            <person name="Naylor J."/>
            <person name="Stange-Thomann N."/>
            <person name="Barrett R."/>
            <person name="Gnerre S."/>
            <person name="Kamal M."/>
            <person name="Kamvysselis M."/>
            <person name="Mauceli E.W."/>
            <person name="Bielke C."/>
            <person name="Rudd S."/>
            <person name="Frishman D."/>
            <person name="Krystofova S."/>
            <person name="Rasmussen C."/>
            <person name="Metzenberg R.L."/>
            <person name="Perkins D.D."/>
            <person name="Kroken S."/>
            <person name="Cogoni C."/>
            <person name="Macino G."/>
            <person name="Catcheside D.E.A."/>
            <person name="Li W."/>
            <person name="Pratt R.J."/>
            <person name="Osmani S.A."/>
            <person name="DeSouza C.P.C."/>
            <person name="Glass N.L."/>
            <person name="Orbach M.J."/>
            <person name="Berglund J.A."/>
            <person name="Voelker R."/>
            <person name="Yarden O."/>
            <person name="Plamann M."/>
            <person name="Seiler S."/>
            <person name="Dunlap J.C."/>
            <person name="Radford A."/>
            <person name="Aramayo R."/>
            <person name="Natvig D.O."/>
            <person name="Alex L.A."/>
            <person name="Mannhaupt G."/>
            <person name="Ebbole D.J."/>
            <person name="Freitag M."/>
            <person name="Paulsen I."/>
            <person name="Sachs M.S."/>
            <person name="Lander E.S."/>
            <person name="Nusbaum C."/>
            <person name="Birren B.W."/>
        </authorList>
    </citation>
    <scope>NUCLEOTIDE SEQUENCE [LARGE SCALE GENOMIC DNA]</scope>
    <source>
        <strain>ATCC 24698 / 74-OR23-1A / CBS 708.71 / DSM 1257 / FGSC 987</strain>
    </source>
</reference>